<feature type="initiator methionine" description="Removed; by host" evidence="2">
    <location>
        <position position="1"/>
    </location>
</feature>
<feature type="chain" id="PRO_0000361033" description="RING finger protein Z" evidence="2">
    <location>
        <begin position="2"/>
        <end position="94"/>
    </location>
</feature>
<feature type="zinc finger region" description="RING-type; atypical" evidence="2">
    <location>
        <begin position="39"/>
        <end position="75"/>
    </location>
</feature>
<feature type="region of interest" description="Disordered" evidence="3">
    <location>
        <begin position="1"/>
        <end position="20"/>
    </location>
</feature>
<feature type="short sequence motif" description="PTAP/PSAP motif" evidence="2">
    <location>
        <begin position="89"/>
        <end position="92"/>
    </location>
</feature>
<feature type="compositionally biased region" description="Polar residues" evidence="3">
    <location>
        <begin position="1"/>
        <end position="19"/>
    </location>
</feature>
<feature type="lipid moiety-binding region" description="N-myristoyl glycine; by host" evidence="2">
    <location>
        <position position="2"/>
    </location>
</feature>
<feature type="strand" evidence="4">
    <location>
        <begin position="33"/>
        <end position="44"/>
    </location>
</feature>
<feature type="strand" evidence="4">
    <location>
        <begin position="55"/>
        <end position="57"/>
    </location>
</feature>
<feature type="helix" evidence="4">
    <location>
        <begin position="59"/>
        <end position="68"/>
    </location>
</feature>
<feature type="strand" evidence="4">
    <location>
        <begin position="70"/>
        <end position="72"/>
    </location>
</feature>
<feature type="strand" evidence="4">
    <location>
        <begin position="74"/>
        <end position="77"/>
    </location>
</feature>
<dbReference type="EMBL" id="AY619640">
    <property type="protein sequence ID" value="AAT40445.1"/>
    <property type="molecule type" value="Genomic_RNA"/>
</dbReference>
<dbReference type="EMBL" id="AY216507">
    <property type="protein sequence ID" value="ABY59838.1"/>
    <property type="molecule type" value="Genomic_RNA"/>
</dbReference>
<dbReference type="PDB" id="7EJU">
    <property type="method" value="EM"/>
    <property type="resolution" value="3.50 A"/>
    <property type="chains" value="B=1-94"/>
</dbReference>
<dbReference type="PDBsum" id="7EJU"/>
<dbReference type="EMDB" id="EMD-31163"/>
<dbReference type="SMR" id="Q6IVU5"/>
<dbReference type="IntAct" id="Q6IVU5">
    <property type="interactions" value="2"/>
</dbReference>
<dbReference type="Proteomes" id="UP000111127">
    <property type="component" value="Genome"/>
</dbReference>
<dbReference type="Proteomes" id="UP000127886">
    <property type="component" value="Genome"/>
</dbReference>
<dbReference type="GO" id="GO:0044220">
    <property type="term" value="C:host cell perinuclear region of cytoplasm"/>
    <property type="evidence" value="ECO:0007669"/>
    <property type="project" value="UniProtKB-SubCell"/>
</dbReference>
<dbReference type="GO" id="GO:0020002">
    <property type="term" value="C:host cell plasma membrane"/>
    <property type="evidence" value="ECO:0007669"/>
    <property type="project" value="UniProtKB-SubCell"/>
</dbReference>
<dbReference type="GO" id="GO:0016020">
    <property type="term" value="C:membrane"/>
    <property type="evidence" value="ECO:0007669"/>
    <property type="project" value="UniProtKB-UniRule"/>
</dbReference>
<dbReference type="GO" id="GO:0044423">
    <property type="term" value="C:virion component"/>
    <property type="evidence" value="ECO:0007669"/>
    <property type="project" value="UniProtKB-UniRule"/>
</dbReference>
<dbReference type="GO" id="GO:0003723">
    <property type="term" value="F:RNA binding"/>
    <property type="evidence" value="ECO:0007669"/>
    <property type="project" value="UniProtKB-UniRule"/>
</dbReference>
<dbReference type="GO" id="GO:0008270">
    <property type="term" value="F:zinc ion binding"/>
    <property type="evidence" value="ECO:0007669"/>
    <property type="project" value="UniProtKB-UniRule"/>
</dbReference>
<dbReference type="GO" id="GO:0046761">
    <property type="term" value="P:viral budding from plasma membrane"/>
    <property type="evidence" value="ECO:0007669"/>
    <property type="project" value="UniProtKB-UniRule"/>
</dbReference>
<dbReference type="GO" id="GO:0039702">
    <property type="term" value="P:viral budding via host ESCRT complex"/>
    <property type="evidence" value="ECO:0007669"/>
    <property type="project" value="UniProtKB-UniRule"/>
</dbReference>
<dbReference type="Gene3D" id="3.30.160.310">
    <property type="match status" value="1"/>
</dbReference>
<dbReference type="HAMAP" id="MF_04087">
    <property type="entry name" value="ARENA_Z"/>
    <property type="match status" value="1"/>
</dbReference>
<dbReference type="InterPro" id="IPR024183">
    <property type="entry name" value="RING_finger_Z_arenaviridae"/>
</dbReference>
<dbReference type="InterPro" id="IPR038485">
    <property type="entry name" value="Z_RING-type_Znf_sf"/>
</dbReference>
<dbReference type="InterPro" id="IPR003224">
    <property type="entry name" value="Z_RING_Znf"/>
</dbReference>
<dbReference type="Pfam" id="PF03854">
    <property type="entry name" value="zf-P11"/>
    <property type="match status" value="1"/>
</dbReference>
<dbReference type="PIRSF" id="PIRSF004030">
    <property type="entry name" value="Z_ArenaV"/>
    <property type="match status" value="1"/>
</dbReference>
<organismHost>
    <name type="scientific">Akodon azarae</name>
    <name type="common">Azara's grass mouse</name>
    <dbReference type="NCBI Taxonomy" id="29095"/>
</organismHost>
<organismHost>
    <name type="scientific">Bolomys</name>
    <dbReference type="NCBI Taxonomy" id="10080"/>
</organismHost>
<organismHost>
    <name type="scientific">Calomys laucha</name>
    <name type="common">Small vesper mouse</name>
    <dbReference type="NCBI Taxonomy" id="56211"/>
</organismHost>
<organismHost>
    <name type="scientific">Calomys musculinus</name>
    <name type="common">Drylands vesper mouse</name>
    <dbReference type="NCBI Taxonomy" id="56212"/>
</organismHost>
<organismHost>
    <name type="scientific">Homo sapiens</name>
    <name type="common">Human</name>
    <dbReference type="NCBI Taxonomy" id="9606"/>
</organismHost>
<gene>
    <name evidence="2" type="primary">Z</name>
</gene>
<comment type="function">
    <text evidence="1 2">Plays a crucial role in virion assembly and budding. Expressed late in the virus life cycle, it acts as an inhibitor of viral transcription and RNA synthesis by interacting with the viral polymerase L. Presumably recruits the NP encapsidated genome to cellular membranes at budding sites via direct interaction with NP. Plays critical roles in the final steps of viral release by interacting with host TSG101, a member of the vacuolar protein-sorting pathway and using other cellular host proteins involved in vesicle formation pathway. The budding of the virus progeny occurs after association of protein Z with the viral glycoprotein complex SSP-GP1-GP2 at the cell periphery, step that requires myristoylation of protein Z. Also selectively represses protein production by associating with host eIF4E (By similarity). In cell-based minigenome assay, has an inhibitory effect on the ribonucleoprotein machinery (vRNP), which is responsible for the replication and transcription of the viral genome (By similarity).</text>
</comment>
<comment type="subunit">
    <text evidence="2">Interacts with protein NP; this interaction probably directs the encapsidated genome to budding sites. Interacts (via RING domain) with polymerase L; this interaction inhibits viral transcription and replication, Z partially blocks the product exit tunnel for the releasing nascent RNA product. Interacts with the glycoprotein complex; this interaction plays a role in virion budding. Interacts with host eIF4E; this interaction results in eIF4E reduced affinity for its substrate, the 5'-m7 G cap structure. Interacts (via late-budding domain) with host TSG101; this interaction is essential for budding and release of viral particles. Interacts with host RPLP0; this interaction may serve to load ribosome-like particles inside the virion. Interacts with host PML; this interaction induces PML bodies redistribution in the cytoplasm upon viral infection.</text>
</comment>
<comment type="interaction">
    <interactant intactId="EBI-3647294">
        <id>Q6IVU5</id>
    </interactant>
    <interactant intactId="EBI-995350">
        <id>O95786</id>
        <label>RIGI</label>
    </interactant>
    <organismsDiffer>true</organismsDiffer>
    <experiments>3</experiments>
</comment>
<comment type="subcellular location">
    <subcellularLocation>
        <location evidence="2">Virion</location>
    </subcellularLocation>
    <subcellularLocation>
        <location evidence="2">Host cytoplasm</location>
        <location evidence="2">Host perinuclear region</location>
    </subcellularLocation>
    <subcellularLocation>
        <location evidence="2">Host cell membrane</location>
        <topology evidence="2">Lipid-anchor</topology>
        <orientation evidence="2">Cytoplasmic side</orientation>
    </subcellularLocation>
    <text evidence="2">Mainly perinuclear. During budding, associates at the inner side of the plasma membrane of infected cells.</text>
</comment>
<comment type="domain">
    <text evidence="2">Late-budding domains (L domains) are short sequence motifs essential for viral particle budding. They recruit proteins of the host ESCRT machinery (Endosomal Sorting Complex Required for Transport) or ESCRT-associated proteins.</text>
</comment>
<comment type="PTM">
    <text evidence="1">Myristoylation is required for the role of RING finger protein Z in assembly and budding (By similarity).</text>
</comment>
<comment type="miscellaneous">
    <text evidence="1">Inhibition of host myristoylation by the compound DDD85646 leads to proteasomal degradation of protein Z (and not lysosomal), strong inhibition of Z-mediated assembly and budding, and reduced levels of viral replication and transcription.</text>
</comment>
<comment type="similarity">
    <text>Belongs to the arenaviridae Z protein family.</text>
</comment>
<keyword id="KW-0002">3D-structure</keyword>
<keyword id="KW-1032">Host cell membrane</keyword>
<keyword id="KW-1035">Host cytoplasm</keyword>
<keyword id="KW-1043">Host membrane</keyword>
<keyword id="KW-0945">Host-virus interaction</keyword>
<keyword id="KW-0449">Lipoprotein</keyword>
<keyword id="KW-0472">Membrane</keyword>
<keyword id="KW-0479">Metal-binding</keyword>
<keyword id="KW-0519">Myristate</keyword>
<keyword id="KW-1198">Viral budding</keyword>
<keyword id="KW-1187">Viral budding via the host ESCRT complexes</keyword>
<keyword id="KW-1188">Viral release from host cell</keyword>
<keyword id="KW-0946">Virion</keyword>
<keyword id="KW-0862">Zinc</keyword>
<keyword id="KW-0863">Zinc-finger</keyword>
<name>Z_JUNIN</name>
<proteinExistence type="evidence at protein level"/>
<reference key="1">
    <citation type="submission" date="2004-06" db="EMBL/GenBank/DDBJ databases">
        <authorList>
            <person name="Hajjaj A."/>
            <person name="Chain P.S.G."/>
            <person name="Do L.H."/>
            <person name="Smith K.L."/>
            <person name="Imbro P.M."/>
            <person name="Malfatti S.A."/>
        </authorList>
    </citation>
    <scope>NUCLEOTIDE SEQUENCE [GENOMIC RNA]</scope>
    <source>
        <strain>Rumero</strain>
    </source>
</reference>
<reference key="2">
    <citation type="submission" date="2004-06" db="EMBL/GenBank/DDBJ databases">
        <authorList>
            <person name="Jahrling P.B."/>
            <person name="Geisbert J."/>
            <person name="Ibrahim M.S."/>
        </authorList>
    </citation>
    <scope>NUCLEOTIDE SEQUENCE [GENOMIC RNA]</scope>
    <source>
        <strain>Rumero</strain>
    </source>
</reference>
<reference key="3">
    <citation type="journal article" date="2003" name="Virology">
        <title>New insights into the evolutionary relationships between arenaviruses provided by comparative analysis of small and large segment sequences.</title>
        <authorList>
            <person name="Charrel R.N."/>
            <person name="Lemasson J.J."/>
            <person name="Garbutt M."/>
            <person name="Khelifa R."/>
            <person name="De Micco P."/>
            <person name="Feldmann H."/>
            <person name="de Lamballerie X."/>
        </authorList>
    </citation>
    <scope>NUCLEOTIDE SEQUENCE [GENOMIC RNA]</scope>
    <source>
        <strain>MC2</strain>
    </source>
</reference>
<reference key="4">
    <citation type="journal article" date="2008" name="Curr. Opin. Microbiol.">
        <title>Phylogeny of the genus Arenavirus.</title>
        <authorList>
            <person name="Charrel R.N."/>
            <person name="de Lamballerie X."/>
            <person name="Emonet S."/>
        </authorList>
    </citation>
    <scope>NUCLEOTIDE SEQUENCE [GENOMIC RNA]</scope>
    <source>
        <strain>MC2</strain>
    </source>
</reference>
<sequence>MGNCNGASKSNQPDSSRVTQPAAEFRRVAHSSLYGRYNCKCCWFADTNLITCNDHYLCLRCHQVMLRNSDLCNICWKPLPTTITVPVEPTAPPP</sequence>
<evidence type="ECO:0000250" key="1">
    <source>
        <dbReference type="UniProtKB" id="P18541"/>
    </source>
</evidence>
<evidence type="ECO:0000255" key="2">
    <source>
        <dbReference type="HAMAP-Rule" id="MF_04087"/>
    </source>
</evidence>
<evidence type="ECO:0000256" key="3">
    <source>
        <dbReference type="SAM" id="MobiDB-lite"/>
    </source>
</evidence>
<evidence type="ECO:0007829" key="4">
    <source>
        <dbReference type="PDB" id="7EJU"/>
    </source>
</evidence>
<accession>Q6IVU5</accession>
<protein>
    <recommendedName>
        <fullName evidence="2">RING finger protein Z</fullName>
        <shortName evidence="2">Protein Z</shortName>
    </recommendedName>
    <alternativeName>
        <fullName evidence="2">Zinc-binding protein</fullName>
    </alternativeName>
</protein>
<organism>
    <name type="scientific">Junin mammarenavirus</name>
    <name type="common">JUNV</name>
    <name type="synonym">Junn mammarenavirus</name>
    <dbReference type="NCBI Taxonomy" id="2169991"/>
    <lineage>
        <taxon>Viruses</taxon>
        <taxon>Riboviria</taxon>
        <taxon>Orthornavirae</taxon>
        <taxon>Negarnaviricota</taxon>
        <taxon>Polyploviricotina</taxon>
        <taxon>Ellioviricetes</taxon>
        <taxon>Bunyavirales</taxon>
        <taxon>Arenaviridae</taxon>
        <taxon>Mammarenavirus</taxon>
    </lineage>
</organism>